<organism>
    <name type="scientific">Homo sapiens</name>
    <name type="common">Human</name>
    <dbReference type="NCBI Taxonomy" id="9606"/>
    <lineage>
        <taxon>Eukaryota</taxon>
        <taxon>Metazoa</taxon>
        <taxon>Chordata</taxon>
        <taxon>Craniata</taxon>
        <taxon>Vertebrata</taxon>
        <taxon>Euteleostomi</taxon>
        <taxon>Mammalia</taxon>
        <taxon>Eutheria</taxon>
        <taxon>Euarchontoglires</taxon>
        <taxon>Primates</taxon>
        <taxon>Haplorrhini</taxon>
        <taxon>Catarrhini</taxon>
        <taxon>Hominidae</taxon>
        <taxon>Homo</taxon>
    </lineage>
</organism>
<keyword id="KW-0002">3D-structure</keyword>
<keyword id="KW-0963">Cytoplasm</keyword>
<keyword id="KW-0206">Cytoskeleton</keyword>
<keyword id="KW-0493">Microtubule</keyword>
<keyword id="KW-0597">Phosphoprotein</keyword>
<keyword id="KW-1267">Proteomics identification</keyword>
<keyword id="KW-1185">Reference proteome</keyword>
<sequence>MEGGGGRDEPSACRAGDVNMDDPKKEDILLLADEKFDFDLSLSSSSANEDDEVFFGPFGHKERCIAASLELNNPVPEQPPLPTSESPFAWSPLAGEKFVEVYKEAHLLALHIESSSRNQAAQAAKPEDPRSQGVERFIQESKLKINLFEKEKEMKKSPTSLKRETYYLSDSPLLGPPVGEPRLLASSPALPSSGAQARLTRAPGPPHSAHALPRESCTAHAASQAATQRKPGTKLLLPRAASVRGRSIPGAAEKPKKEIPASPSRTKIPAEKESHRDVLPDKPAPGAVNVPAAGSHLGQGKRAIPVPNKLGLKKTLLKAPGSTSNLARKSSSGPVWSGASSACTSPAVGKAKSSEFASIPANSSRPLSNISKSGRMGPAMLRPALPAGPVGASSWQAKRVDVSELAAEQLTAPPSASPTQPQTPEGGGQWLNSSCAWSESSQLNKTRSIRRRDSCLNSKTKVMPTPTNQFKIPKFSIGDSPDSSTPKLSRAQRPQSCTSVGRVTVHSTPVRRSSGPAPQSLLSAWRVSALPTPASRRCSGLPPMTPKTMPRAVGSPLCVPARRRSSEPRKNSAMRTEPTRESNRKTDSRLVDVSPDRGSPPSRVPQALNFSPEESDSTFSKSTATEVAREEAKPGGDAAPSEALLVDIKLEPLAVTPDAASQPLIDLPLIDFCDTPEAHVAVGSESRPLIDLMTNTPDMNKNVAKPSPVVGQLIDLSSPLIQLSPEADKENVDSPLLKF</sequence>
<gene>
    <name evidence="9" type="primary">GTSE1</name>
</gene>
<dbReference type="EMBL" id="AF223408">
    <property type="protein sequence ID" value="AAF31459.1"/>
    <property type="status" value="ALT_INIT"/>
    <property type="molecule type" value="mRNA"/>
</dbReference>
<dbReference type="EMBL" id="AK222806">
    <property type="protein sequence ID" value="BAD96526.1"/>
    <property type="status" value="ALT_INIT"/>
    <property type="molecule type" value="mRNA"/>
</dbReference>
<dbReference type="EMBL" id="AK315550">
    <property type="protein sequence ID" value="BAG37928.1"/>
    <property type="status" value="ALT_INIT"/>
    <property type="molecule type" value="mRNA"/>
</dbReference>
<dbReference type="EMBL" id="AL031588">
    <property type="status" value="NOT_ANNOTATED_CDS"/>
    <property type="molecule type" value="Genomic_DNA"/>
</dbReference>
<dbReference type="EMBL" id="Z93024">
    <property type="status" value="NOT_ANNOTATED_CDS"/>
    <property type="molecule type" value="Genomic_DNA"/>
</dbReference>
<dbReference type="EMBL" id="BC006325">
    <property type="protein sequence ID" value="AAH06325.1"/>
    <property type="status" value="ALT_INIT"/>
    <property type="molecule type" value="mRNA"/>
</dbReference>
<dbReference type="EMBL" id="BC075828">
    <property type="protein sequence ID" value="AAH75828.1"/>
    <property type="status" value="ALT_INIT"/>
    <property type="molecule type" value="mRNA"/>
</dbReference>
<dbReference type="EMBL" id="CT841519">
    <property type="protein sequence ID" value="CAJ86449.1"/>
    <property type="status" value="ALT_INIT"/>
    <property type="molecule type" value="mRNA"/>
</dbReference>
<dbReference type="CCDS" id="CCDS14074.2"/>
<dbReference type="RefSeq" id="NP_057510.4">
    <property type="nucleotide sequence ID" value="NM_016426.6"/>
</dbReference>
<dbReference type="RefSeq" id="XP_005261684.1">
    <property type="nucleotide sequence ID" value="XM_005261627.3"/>
</dbReference>
<dbReference type="RefSeq" id="XP_016884304.1">
    <property type="nucleotide sequence ID" value="XM_017028815.1"/>
</dbReference>
<dbReference type="RefSeq" id="XP_047297347.1">
    <property type="nucleotide sequence ID" value="XM_047441391.1"/>
</dbReference>
<dbReference type="PDB" id="6QNN">
    <property type="method" value="X-ray"/>
    <property type="resolution" value="2.03 A"/>
    <property type="chains" value="B=661-726"/>
</dbReference>
<dbReference type="PDB" id="6QNP">
    <property type="method" value="X-ray"/>
    <property type="resolution" value="2.70 A"/>
    <property type="chains" value="H/I/J/K=653-719"/>
</dbReference>
<dbReference type="PDBsum" id="6QNN"/>
<dbReference type="PDBsum" id="6QNP"/>
<dbReference type="SMR" id="Q9NYZ3"/>
<dbReference type="BioGRID" id="119580">
    <property type="interactions" value="226"/>
</dbReference>
<dbReference type="FunCoup" id="Q9NYZ3">
    <property type="interactions" value="1855"/>
</dbReference>
<dbReference type="IntAct" id="Q9NYZ3">
    <property type="interactions" value="181"/>
</dbReference>
<dbReference type="MINT" id="Q9NYZ3"/>
<dbReference type="STRING" id="9606.ENSP00000415430"/>
<dbReference type="GlyGen" id="Q9NYZ3">
    <property type="glycosylation" value="3 sites, 1 O-linked glycan (1 site)"/>
</dbReference>
<dbReference type="iPTMnet" id="Q9NYZ3"/>
<dbReference type="PhosphoSitePlus" id="Q9NYZ3"/>
<dbReference type="BioMuta" id="GTSE1"/>
<dbReference type="DMDM" id="317373439"/>
<dbReference type="jPOST" id="Q9NYZ3"/>
<dbReference type="MassIVE" id="Q9NYZ3"/>
<dbReference type="PaxDb" id="9606-ENSP00000415430"/>
<dbReference type="PeptideAtlas" id="Q9NYZ3"/>
<dbReference type="ProteomicsDB" id="83306"/>
<dbReference type="Pumba" id="Q9NYZ3"/>
<dbReference type="Antibodypedia" id="28047">
    <property type="antibodies" value="263 antibodies from 30 providers"/>
</dbReference>
<dbReference type="DNASU" id="51512"/>
<dbReference type="Ensembl" id="ENST00000454366.2">
    <property type="protein sequence ID" value="ENSP00000415430.1"/>
    <property type="gene ID" value="ENSG00000075218.19"/>
</dbReference>
<dbReference type="GeneID" id="51512"/>
<dbReference type="KEGG" id="hsa:51512"/>
<dbReference type="MANE-Select" id="ENST00000454366.2">
    <property type="protein sequence ID" value="ENSP00000415430.1"/>
    <property type="RefSeq nucleotide sequence ID" value="NM_016426.7"/>
    <property type="RefSeq protein sequence ID" value="NP_057510.5"/>
</dbReference>
<dbReference type="UCSC" id="uc011aqy.2">
    <property type="organism name" value="human"/>
</dbReference>
<dbReference type="AGR" id="HGNC:13698"/>
<dbReference type="CTD" id="51512"/>
<dbReference type="DisGeNET" id="51512"/>
<dbReference type="GeneCards" id="GTSE1"/>
<dbReference type="HGNC" id="HGNC:13698">
    <property type="gene designation" value="GTSE1"/>
</dbReference>
<dbReference type="HPA" id="ENSG00000075218">
    <property type="expression patterns" value="Tissue enhanced (bone marrow, lymphoid tissue)"/>
</dbReference>
<dbReference type="MalaCards" id="GTSE1"/>
<dbReference type="MIM" id="607477">
    <property type="type" value="gene"/>
</dbReference>
<dbReference type="neXtProt" id="NX_Q9NYZ3"/>
<dbReference type="OpenTargets" id="ENSG00000075218"/>
<dbReference type="PharmGKB" id="PA29061"/>
<dbReference type="VEuPathDB" id="HostDB:ENSG00000075218"/>
<dbReference type="eggNOG" id="ENOG502QW86">
    <property type="taxonomic scope" value="Eukaryota"/>
</dbReference>
<dbReference type="GeneTree" id="ENSGT00940000154189"/>
<dbReference type="HOGENOM" id="CLU_023558_0_0_1"/>
<dbReference type="InParanoid" id="Q9NYZ3"/>
<dbReference type="OMA" id="MTPKMMP"/>
<dbReference type="OrthoDB" id="10072587at2759"/>
<dbReference type="PAN-GO" id="Q9NYZ3">
    <property type="GO annotations" value="3 GO annotations based on evolutionary models"/>
</dbReference>
<dbReference type="PhylomeDB" id="Q9NYZ3"/>
<dbReference type="TreeFam" id="TF332555"/>
<dbReference type="PathwayCommons" id="Q9NYZ3"/>
<dbReference type="Reactome" id="R-HSA-69481">
    <property type="pathway name" value="G2/M Checkpoints"/>
</dbReference>
<dbReference type="Reactome" id="R-HSA-8852276">
    <property type="pathway name" value="The role of GTSE1 in G2/M progression after G2 checkpoint"/>
</dbReference>
<dbReference type="SignaLink" id="Q9NYZ3"/>
<dbReference type="SIGNOR" id="Q9NYZ3"/>
<dbReference type="BioGRID-ORCS" id="51512">
    <property type="hits" value="104 hits in 1174 CRISPR screens"/>
</dbReference>
<dbReference type="ChiTaRS" id="GTSE1">
    <property type="organism name" value="human"/>
</dbReference>
<dbReference type="GeneWiki" id="GTSE1"/>
<dbReference type="GenomeRNAi" id="51512"/>
<dbReference type="Pharos" id="Q9NYZ3">
    <property type="development level" value="Tbio"/>
</dbReference>
<dbReference type="PRO" id="PR:Q9NYZ3"/>
<dbReference type="Proteomes" id="UP000005640">
    <property type="component" value="Chromosome 22"/>
</dbReference>
<dbReference type="RNAct" id="Q9NYZ3">
    <property type="molecule type" value="protein"/>
</dbReference>
<dbReference type="Bgee" id="ENSG00000075218">
    <property type="expression patterns" value="Expressed in trabecular bone tissue and 203 other cell types or tissues"/>
</dbReference>
<dbReference type="GO" id="GO:0005881">
    <property type="term" value="C:cytoplasmic microtubule"/>
    <property type="evidence" value="ECO:0000314"/>
    <property type="project" value="UniProtKB"/>
</dbReference>
<dbReference type="GO" id="GO:0005829">
    <property type="term" value="C:cytosol"/>
    <property type="evidence" value="ECO:0000304"/>
    <property type="project" value="Reactome"/>
</dbReference>
<dbReference type="GO" id="GO:0016020">
    <property type="term" value="C:membrane"/>
    <property type="evidence" value="ECO:0007005"/>
    <property type="project" value="UniProtKB"/>
</dbReference>
<dbReference type="GO" id="GO:0015630">
    <property type="term" value="C:microtubule cytoskeleton"/>
    <property type="evidence" value="ECO:0000318"/>
    <property type="project" value="GO_Central"/>
</dbReference>
<dbReference type="GO" id="GO:0005654">
    <property type="term" value="C:nucleoplasm"/>
    <property type="evidence" value="ECO:0000304"/>
    <property type="project" value="Reactome"/>
</dbReference>
<dbReference type="GO" id="GO:0008017">
    <property type="term" value="F:microtubule binding"/>
    <property type="evidence" value="ECO:0000318"/>
    <property type="project" value="GO_Central"/>
</dbReference>
<dbReference type="GO" id="GO:0030330">
    <property type="term" value="P:DNA damage response, signal transduction by p53 class mediator"/>
    <property type="evidence" value="ECO:0000303"/>
    <property type="project" value="UniProtKB"/>
</dbReference>
<dbReference type="GO" id="GO:0007017">
    <property type="term" value="P:microtubule-based process"/>
    <property type="evidence" value="ECO:0000303"/>
    <property type="project" value="UniProtKB"/>
</dbReference>
<dbReference type="CDD" id="cd21864">
    <property type="entry name" value="GTSE1_CTD"/>
    <property type="match status" value="1"/>
</dbReference>
<dbReference type="InterPro" id="IPR026657">
    <property type="entry name" value="DDA3/GTSE-1"/>
</dbReference>
<dbReference type="InterPro" id="IPR032768">
    <property type="entry name" value="GTSE1_N"/>
</dbReference>
<dbReference type="PANTHER" id="PTHR21584">
    <property type="entry name" value="DIFFERENTIAL DISPLAY AND ACTIVATED BY P53 DDA3 /G2 S PHASE EXPRESSED 1"/>
    <property type="match status" value="1"/>
</dbReference>
<dbReference type="PANTHER" id="PTHR21584:SF10">
    <property type="entry name" value="G2 AND S PHASE-EXPRESSED PROTEIN 1"/>
    <property type="match status" value="1"/>
</dbReference>
<dbReference type="Pfam" id="PF15259">
    <property type="entry name" value="GTSE1_N"/>
    <property type="match status" value="1"/>
</dbReference>
<evidence type="ECO:0000250" key="1"/>
<evidence type="ECO:0000250" key="2">
    <source>
        <dbReference type="UniProtKB" id="Q8R080"/>
    </source>
</evidence>
<evidence type="ECO:0000256" key="3">
    <source>
        <dbReference type="SAM" id="MobiDB-lite"/>
    </source>
</evidence>
<evidence type="ECO:0000269" key="4">
    <source>
    </source>
</evidence>
<evidence type="ECO:0000269" key="5">
    <source>
    </source>
</evidence>
<evidence type="ECO:0000269" key="6">
    <source>
    </source>
</evidence>
<evidence type="ECO:0000269" key="7">
    <source>
    </source>
</evidence>
<evidence type="ECO:0000305" key="8"/>
<evidence type="ECO:0000312" key="9">
    <source>
        <dbReference type="HGNC" id="HGNC:13698"/>
    </source>
</evidence>
<evidence type="ECO:0007744" key="10">
    <source>
    </source>
</evidence>
<evidence type="ECO:0007744" key="11">
    <source>
    </source>
</evidence>
<evidence type="ECO:0007744" key="12">
    <source>
    </source>
</evidence>
<evidence type="ECO:0007744" key="13">
    <source>
    </source>
</evidence>
<evidence type="ECO:0007744" key="14">
    <source>
    </source>
</evidence>
<accession>Q9NYZ3</accession>
<accession>B0QYM3</accession>
<accession>Q20WK2</accession>
<accession>Q53GX5</accession>
<accession>Q5R3I6</accession>
<accession>Q6DHX4</accession>
<accession>Q9BRE0</accession>
<accession>Q9UGZ9</accession>
<accession>Q9Y557</accession>
<protein>
    <recommendedName>
        <fullName evidence="8">G2 and S phase-expressed protein 1</fullName>
        <shortName>GTSE-1</shortName>
    </recommendedName>
    <alternativeName>
        <fullName>Protein B99 homolog</fullName>
    </alternativeName>
</protein>
<reference key="1">
    <citation type="journal article" date="2000" name="Gene">
        <title>Cloning, chromosome mapping and functional characterization of a human homologue of murine Gtse-1 (B99) gene.</title>
        <authorList>
            <person name="Monte M."/>
            <person name="Collavin L."/>
            <person name="Lazarevic D."/>
            <person name="Utrera R."/>
            <person name="Dragani T.A."/>
            <person name="Schneider C."/>
        </authorList>
    </citation>
    <scope>NUCLEOTIDE SEQUENCE [MRNA]</scope>
    <scope>VARIANT ARG-525</scope>
    <source>
        <tissue>Placenta</tissue>
    </source>
</reference>
<reference key="2">
    <citation type="journal article" date="2004" name="Nat. Genet.">
        <title>Complete sequencing and characterization of 21,243 full-length human cDNAs.</title>
        <authorList>
            <person name="Ota T."/>
            <person name="Suzuki Y."/>
            <person name="Nishikawa T."/>
            <person name="Otsuki T."/>
            <person name="Sugiyama T."/>
            <person name="Irie R."/>
            <person name="Wakamatsu A."/>
            <person name="Hayashi K."/>
            <person name="Sato H."/>
            <person name="Nagai K."/>
            <person name="Kimura K."/>
            <person name="Makita H."/>
            <person name="Sekine M."/>
            <person name="Obayashi M."/>
            <person name="Nishi T."/>
            <person name="Shibahara T."/>
            <person name="Tanaka T."/>
            <person name="Ishii S."/>
            <person name="Yamamoto J."/>
            <person name="Saito K."/>
            <person name="Kawai Y."/>
            <person name="Isono Y."/>
            <person name="Nakamura Y."/>
            <person name="Nagahari K."/>
            <person name="Murakami K."/>
            <person name="Yasuda T."/>
            <person name="Iwayanagi T."/>
            <person name="Wagatsuma M."/>
            <person name="Shiratori A."/>
            <person name="Sudo H."/>
            <person name="Hosoiri T."/>
            <person name="Kaku Y."/>
            <person name="Kodaira H."/>
            <person name="Kondo H."/>
            <person name="Sugawara M."/>
            <person name="Takahashi M."/>
            <person name="Kanda K."/>
            <person name="Yokoi T."/>
            <person name="Furuya T."/>
            <person name="Kikkawa E."/>
            <person name="Omura Y."/>
            <person name="Abe K."/>
            <person name="Kamihara K."/>
            <person name="Katsuta N."/>
            <person name="Sato K."/>
            <person name="Tanikawa M."/>
            <person name="Yamazaki M."/>
            <person name="Ninomiya K."/>
            <person name="Ishibashi T."/>
            <person name="Yamashita H."/>
            <person name="Murakawa K."/>
            <person name="Fujimori K."/>
            <person name="Tanai H."/>
            <person name="Kimata M."/>
            <person name="Watanabe M."/>
            <person name="Hiraoka S."/>
            <person name="Chiba Y."/>
            <person name="Ishida S."/>
            <person name="Ono Y."/>
            <person name="Takiguchi S."/>
            <person name="Watanabe S."/>
            <person name="Yosida M."/>
            <person name="Hotuta T."/>
            <person name="Kusano J."/>
            <person name="Kanehori K."/>
            <person name="Takahashi-Fujii A."/>
            <person name="Hara H."/>
            <person name="Tanase T.-O."/>
            <person name="Nomura Y."/>
            <person name="Togiya S."/>
            <person name="Komai F."/>
            <person name="Hara R."/>
            <person name="Takeuchi K."/>
            <person name="Arita M."/>
            <person name="Imose N."/>
            <person name="Musashino K."/>
            <person name="Yuuki H."/>
            <person name="Oshima A."/>
            <person name="Sasaki N."/>
            <person name="Aotsuka S."/>
            <person name="Yoshikawa Y."/>
            <person name="Matsunawa H."/>
            <person name="Ichihara T."/>
            <person name="Shiohata N."/>
            <person name="Sano S."/>
            <person name="Moriya S."/>
            <person name="Momiyama H."/>
            <person name="Satoh N."/>
            <person name="Takami S."/>
            <person name="Terashima Y."/>
            <person name="Suzuki O."/>
            <person name="Nakagawa S."/>
            <person name="Senoh A."/>
            <person name="Mizoguchi H."/>
            <person name="Goto Y."/>
            <person name="Shimizu F."/>
            <person name="Wakebe H."/>
            <person name="Hishigaki H."/>
            <person name="Watanabe T."/>
            <person name="Sugiyama A."/>
            <person name="Takemoto M."/>
            <person name="Kawakami B."/>
            <person name="Yamazaki M."/>
            <person name="Watanabe K."/>
            <person name="Kumagai A."/>
            <person name="Itakura S."/>
            <person name="Fukuzumi Y."/>
            <person name="Fujimori Y."/>
            <person name="Komiyama M."/>
            <person name="Tashiro H."/>
            <person name="Tanigami A."/>
            <person name="Fujiwara T."/>
            <person name="Ono T."/>
            <person name="Yamada K."/>
            <person name="Fujii Y."/>
            <person name="Ozaki K."/>
            <person name="Hirao M."/>
            <person name="Ohmori Y."/>
            <person name="Kawabata A."/>
            <person name="Hikiji T."/>
            <person name="Kobatake N."/>
            <person name="Inagaki H."/>
            <person name="Ikema Y."/>
            <person name="Okamoto S."/>
            <person name="Okitani R."/>
            <person name="Kawakami T."/>
            <person name="Noguchi S."/>
            <person name="Itoh T."/>
            <person name="Shigeta K."/>
            <person name="Senba T."/>
            <person name="Matsumura K."/>
            <person name="Nakajima Y."/>
            <person name="Mizuno T."/>
            <person name="Morinaga M."/>
            <person name="Sasaki M."/>
            <person name="Togashi T."/>
            <person name="Oyama M."/>
            <person name="Hata H."/>
            <person name="Watanabe M."/>
            <person name="Komatsu T."/>
            <person name="Mizushima-Sugano J."/>
            <person name="Satoh T."/>
            <person name="Shirai Y."/>
            <person name="Takahashi Y."/>
            <person name="Nakagawa K."/>
            <person name="Okumura K."/>
            <person name="Nagase T."/>
            <person name="Nomura N."/>
            <person name="Kikuchi H."/>
            <person name="Masuho Y."/>
            <person name="Yamashita R."/>
            <person name="Nakai K."/>
            <person name="Yada T."/>
            <person name="Nakamura Y."/>
            <person name="Ohara O."/>
            <person name="Isogai T."/>
            <person name="Sugano S."/>
        </authorList>
    </citation>
    <scope>NUCLEOTIDE SEQUENCE [LARGE SCALE MRNA]</scope>
    <scope>VARIANT ARG-525</scope>
    <source>
        <tissue>Liver</tissue>
        <tissue>Placenta</tissue>
    </source>
</reference>
<reference key="3">
    <citation type="journal article" date="1999" name="Nature">
        <title>The DNA sequence of human chromosome 22.</title>
        <authorList>
            <person name="Dunham I."/>
            <person name="Hunt A.R."/>
            <person name="Collins J.E."/>
            <person name="Bruskiewich R."/>
            <person name="Beare D.M."/>
            <person name="Clamp M."/>
            <person name="Smink L.J."/>
            <person name="Ainscough R."/>
            <person name="Almeida J.P."/>
            <person name="Babbage A.K."/>
            <person name="Bagguley C."/>
            <person name="Bailey J."/>
            <person name="Barlow K.F."/>
            <person name="Bates K.N."/>
            <person name="Beasley O.P."/>
            <person name="Bird C.P."/>
            <person name="Blakey S.E."/>
            <person name="Bridgeman A.M."/>
            <person name="Buck D."/>
            <person name="Burgess J."/>
            <person name="Burrill W.D."/>
            <person name="Burton J."/>
            <person name="Carder C."/>
            <person name="Carter N.P."/>
            <person name="Chen Y."/>
            <person name="Clark G."/>
            <person name="Clegg S.M."/>
            <person name="Cobley V.E."/>
            <person name="Cole C.G."/>
            <person name="Collier R.E."/>
            <person name="Connor R."/>
            <person name="Conroy D."/>
            <person name="Corby N.R."/>
            <person name="Coville G.J."/>
            <person name="Cox A.V."/>
            <person name="Davis J."/>
            <person name="Dawson E."/>
            <person name="Dhami P.D."/>
            <person name="Dockree C."/>
            <person name="Dodsworth S.J."/>
            <person name="Durbin R.M."/>
            <person name="Ellington A.G."/>
            <person name="Evans K.L."/>
            <person name="Fey J.M."/>
            <person name="Fleming K."/>
            <person name="French L."/>
            <person name="Garner A.A."/>
            <person name="Gilbert J.G.R."/>
            <person name="Goward M.E."/>
            <person name="Grafham D.V."/>
            <person name="Griffiths M.N.D."/>
            <person name="Hall C."/>
            <person name="Hall R.E."/>
            <person name="Hall-Tamlyn G."/>
            <person name="Heathcott R.W."/>
            <person name="Ho S."/>
            <person name="Holmes S."/>
            <person name="Hunt S.E."/>
            <person name="Jones M.C."/>
            <person name="Kershaw J."/>
            <person name="Kimberley A.M."/>
            <person name="King A."/>
            <person name="Laird G.K."/>
            <person name="Langford C.F."/>
            <person name="Leversha M.A."/>
            <person name="Lloyd C."/>
            <person name="Lloyd D.M."/>
            <person name="Martyn I.D."/>
            <person name="Mashreghi-Mohammadi M."/>
            <person name="Matthews L.H."/>
            <person name="Mccann O.T."/>
            <person name="Mcclay J."/>
            <person name="Mclaren S."/>
            <person name="McMurray A.A."/>
            <person name="Milne S.A."/>
            <person name="Mortimore B.J."/>
            <person name="Odell C.N."/>
            <person name="Pavitt R."/>
            <person name="Pearce A.V."/>
            <person name="Pearson D."/>
            <person name="Phillimore B.J.C.T."/>
            <person name="Phillips S.H."/>
            <person name="Plumb R.W."/>
            <person name="Ramsay H."/>
            <person name="Ramsey Y."/>
            <person name="Rogers L."/>
            <person name="Ross M.T."/>
            <person name="Scott C.E."/>
            <person name="Sehra H.K."/>
            <person name="Skuce C.D."/>
            <person name="Smalley S."/>
            <person name="Smith M.L."/>
            <person name="Soderlund C."/>
            <person name="Spragon L."/>
            <person name="Steward C.A."/>
            <person name="Sulston J.E."/>
            <person name="Swann R.M."/>
            <person name="Vaudin M."/>
            <person name="Wall M."/>
            <person name="Wallis J.M."/>
            <person name="Whiteley M.N."/>
            <person name="Willey D.L."/>
            <person name="Williams L."/>
            <person name="Williams S.A."/>
            <person name="Williamson H."/>
            <person name="Wilmer T.E."/>
            <person name="Wilming L."/>
            <person name="Wright C.L."/>
            <person name="Hubbard T."/>
            <person name="Bentley D.R."/>
            <person name="Beck S."/>
            <person name="Rogers J."/>
            <person name="Shimizu N."/>
            <person name="Minoshima S."/>
            <person name="Kawasaki K."/>
            <person name="Sasaki T."/>
            <person name="Asakawa S."/>
            <person name="Kudoh J."/>
            <person name="Shintani A."/>
            <person name="Shibuya K."/>
            <person name="Yoshizaki Y."/>
            <person name="Aoki N."/>
            <person name="Mitsuyama S."/>
            <person name="Roe B.A."/>
            <person name="Chen F."/>
            <person name="Chu L."/>
            <person name="Crabtree J."/>
            <person name="Deschamps S."/>
            <person name="Do A."/>
            <person name="Do T."/>
            <person name="Dorman A."/>
            <person name="Fang F."/>
            <person name="Fu Y."/>
            <person name="Hu P."/>
            <person name="Hua A."/>
            <person name="Kenton S."/>
            <person name="Lai H."/>
            <person name="Lao H.I."/>
            <person name="Lewis J."/>
            <person name="Lewis S."/>
            <person name="Lin S.-P."/>
            <person name="Loh P."/>
            <person name="Malaj E."/>
            <person name="Nguyen T."/>
            <person name="Pan H."/>
            <person name="Phan S."/>
            <person name="Qi S."/>
            <person name="Qian Y."/>
            <person name="Ray L."/>
            <person name="Ren Q."/>
            <person name="Shaull S."/>
            <person name="Sloan D."/>
            <person name="Song L."/>
            <person name="Wang Q."/>
            <person name="Wang Y."/>
            <person name="Wang Z."/>
            <person name="White J."/>
            <person name="Willingham D."/>
            <person name="Wu H."/>
            <person name="Yao Z."/>
            <person name="Zhan M."/>
            <person name="Zhang G."/>
            <person name="Chissoe S."/>
            <person name="Murray J."/>
            <person name="Miller N."/>
            <person name="Minx P."/>
            <person name="Fulton R."/>
            <person name="Johnson D."/>
            <person name="Bemis G."/>
            <person name="Bentley D."/>
            <person name="Bradshaw H."/>
            <person name="Bourne S."/>
            <person name="Cordes M."/>
            <person name="Du Z."/>
            <person name="Fulton L."/>
            <person name="Goela D."/>
            <person name="Graves T."/>
            <person name="Hawkins J."/>
            <person name="Hinds K."/>
            <person name="Kemp K."/>
            <person name="Latreille P."/>
            <person name="Layman D."/>
            <person name="Ozersky P."/>
            <person name="Rohlfing T."/>
            <person name="Scheet P."/>
            <person name="Walker C."/>
            <person name="Wamsley A."/>
            <person name="Wohldmann P."/>
            <person name="Pepin K."/>
            <person name="Nelson J."/>
            <person name="Korf I."/>
            <person name="Bedell J.A."/>
            <person name="Hillier L.W."/>
            <person name="Mardis E."/>
            <person name="Waterston R."/>
            <person name="Wilson R."/>
            <person name="Emanuel B.S."/>
            <person name="Shaikh T."/>
            <person name="Kurahashi H."/>
            <person name="Saitta S."/>
            <person name="Budarf M.L."/>
            <person name="McDermid H.E."/>
            <person name="Johnson A."/>
            <person name="Wong A.C.C."/>
            <person name="Morrow B.E."/>
            <person name="Edelmann L."/>
            <person name="Kim U.J."/>
            <person name="Shizuya H."/>
            <person name="Simon M.I."/>
            <person name="Dumanski J.P."/>
            <person name="Peyrard M."/>
            <person name="Kedra D."/>
            <person name="Seroussi E."/>
            <person name="Fransson I."/>
            <person name="Tapia I."/>
            <person name="Bruder C.E."/>
            <person name="O'Brien K.P."/>
            <person name="Wilkinson P."/>
            <person name="Bodenteich A."/>
            <person name="Hartman K."/>
            <person name="Hu X."/>
            <person name="Khan A.S."/>
            <person name="Lane L."/>
            <person name="Tilahun Y."/>
            <person name="Wright H."/>
        </authorList>
    </citation>
    <scope>NUCLEOTIDE SEQUENCE [LARGE SCALE GENOMIC DNA]</scope>
</reference>
<reference key="4">
    <citation type="journal article" date="2004" name="Genome Res.">
        <title>The status, quality, and expansion of the NIH full-length cDNA project: the Mammalian Gene Collection (MGC).</title>
        <authorList>
            <consortium name="The MGC Project Team"/>
        </authorList>
    </citation>
    <scope>NUCLEOTIDE SEQUENCE [LARGE SCALE MRNA]</scope>
    <scope>VARIANT ARG-525</scope>
    <source>
        <tissue>Brain</tissue>
        <tissue>Muscle</tissue>
    </source>
</reference>
<reference key="5">
    <citation type="journal article" date="2004" name="Genome Biol.">
        <title>A genome annotation-driven approach to cloning the human ORFeome.</title>
        <authorList>
            <person name="Collins J.E."/>
            <person name="Wright C.L."/>
            <person name="Edwards C.A."/>
            <person name="Davis M.P."/>
            <person name="Grinham J.A."/>
            <person name="Cole C.G."/>
            <person name="Goward M.E."/>
            <person name="Aguado B."/>
            <person name="Mallya M."/>
            <person name="Mokrab Y."/>
            <person name="Huckle E.J."/>
            <person name="Beare D.M."/>
            <person name="Dunham I."/>
        </authorList>
    </citation>
    <scope>NUCLEOTIDE SEQUENCE [LARGE SCALE MRNA] OF 16-739</scope>
    <scope>VARIANT ARG-525</scope>
</reference>
<reference key="6">
    <citation type="journal article" date="2006" name="Nat. Biotechnol.">
        <title>A probability-based approach for high-throughput protein phosphorylation analysis and site localization.</title>
        <authorList>
            <person name="Beausoleil S.A."/>
            <person name="Villen J."/>
            <person name="Gerber S.A."/>
            <person name="Rush J."/>
            <person name="Gygi S.P."/>
        </authorList>
    </citation>
    <scope>PHOSPHORYLATION [LARGE SCALE ANALYSIS] AT SER-187; SER-523 AND SER-611</scope>
    <scope>VARIANT [LARGE SCALE ANALYSIS] ARG-525</scope>
    <scope>IDENTIFICATION BY MASS SPECTROMETRY [LARGE SCALE ANALYSIS]</scope>
    <source>
        <tissue>Cervix carcinoma</tissue>
    </source>
</reference>
<reference key="7">
    <citation type="journal article" date="2008" name="J. Proteome Res.">
        <title>Combining protein-based IMAC, peptide-based IMAC, and MudPIT for efficient phosphoproteomic analysis.</title>
        <authorList>
            <person name="Cantin G.T."/>
            <person name="Yi W."/>
            <person name="Lu B."/>
            <person name="Park S.K."/>
            <person name="Xu T."/>
            <person name="Lee J.-D."/>
            <person name="Yates J.R. III"/>
        </authorList>
    </citation>
    <scope>IDENTIFICATION BY MASS SPECTROMETRY [LARGE SCALE ANALYSIS]</scope>
    <source>
        <tissue>Cervix carcinoma</tissue>
    </source>
</reference>
<reference key="8">
    <citation type="journal article" date="2008" name="Mol. Cell">
        <title>Kinase-selective enrichment enables quantitative phosphoproteomics of the kinome across the cell cycle.</title>
        <authorList>
            <person name="Daub H."/>
            <person name="Olsen J.V."/>
            <person name="Bairlein M."/>
            <person name="Gnad F."/>
            <person name="Oppermann F.S."/>
            <person name="Korner R."/>
            <person name="Greff Z."/>
            <person name="Keri G."/>
            <person name="Stemmann O."/>
            <person name="Mann M."/>
        </authorList>
    </citation>
    <scope>PHOSPHORYLATION [LARGE SCALE ANALYSIS] AT SER-611</scope>
    <scope>IDENTIFICATION BY MASS SPECTROMETRY [LARGE SCALE ANALYSIS]</scope>
    <source>
        <tissue>Cervix carcinoma</tissue>
    </source>
</reference>
<reference key="9">
    <citation type="journal article" date="2008" name="Proc. Natl. Acad. Sci. U.S.A.">
        <title>A quantitative atlas of mitotic phosphorylation.</title>
        <authorList>
            <person name="Dephoure N."/>
            <person name="Zhou C."/>
            <person name="Villen J."/>
            <person name="Beausoleil S.A."/>
            <person name="Bakalarski C.E."/>
            <person name="Elledge S.J."/>
            <person name="Gygi S.P."/>
        </authorList>
    </citation>
    <scope>PHOSPHORYLATION [LARGE SCALE ANALYSIS] AT SER-171; SER-187; SER-496; SER-499; SER-514; SER-520; SER-523; SER-594 AND SER-611</scope>
    <scope>VARIANT [LARGE SCALE ANALYSIS] ARG-525</scope>
    <scope>IDENTIFICATION BY MASS SPECTROMETRY [LARGE SCALE ANALYSIS]</scope>
    <source>
        <tissue>Cervix carcinoma</tissue>
    </source>
</reference>
<reference key="10">
    <citation type="journal article" date="2009" name="Anal. Chem.">
        <title>Lys-N and trypsin cover complementary parts of the phosphoproteome in a refined SCX-based approach.</title>
        <authorList>
            <person name="Gauci S."/>
            <person name="Helbig A.O."/>
            <person name="Slijper M."/>
            <person name="Krijgsveld J."/>
            <person name="Heck A.J."/>
            <person name="Mohammed S."/>
        </authorList>
    </citation>
    <scope>IDENTIFICATION BY MASS SPECTROMETRY [LARGE SCALE ANALYSIS]</scope>
</reference>
<reference key="11">
    <citation type="journal article" date="2009" name="Sci. Signal.">
        <title>Quantitative phosphoproteomic analysis of T cell receptor signaling reveals system-wide modulation of protein-protein interactions.</title>
        <authorList>
            <person name="Mayya V."/>
            <person name="Lundgren D.H."/>
            <person name="Hwang S.-I."/>
            <person name="Rezaul K."/>
            <person name="Wu L."/>
            <person name="Eng J.K."/>
            <person name="Rodionov V."/>
            <person name="Han D.K."/>
        </authorList>
    </citation>
    <scope>IDENTIFICATION BY MASS SPECTROMETRY [LARGE SCALE ANALYSIS]</scope>
    <source>
        <tissue>Leukemic T-cell</tissue>
    </source>
</reference>
<reference key="12">
    <citation type="journal article" date="2010" name="Sci. Signal.">
        <title>Quantitative phosphoproteomics reveals widespread full phosphorylation site occupancy during mitosis.</title>
        <authorList>
            <person name="Olsen J.V."/>
            <person name="Vermeulen M."/>
            <person name="Santamaria A."/>
            <person name="Kumar C."/>
            <person name="Miller M.L."/>
            <person name="Jensen L.J."/>
            <person name="Gnad F."/>
            <person name="Cox J."/>
            <person name="Jensen T.S."/>
            <person name="Nigg E.A."/>
            <person name="Brunak S."/>
            <person name="Mann M."/>
        </authorList>
    </citation>
    <scope>PHOSPHORYLATION [LARGE SCALE ANALYSIS] AT SER-91; SER-157; THR-159; SER-171; SER-187; SER-208; SER-514; SER-523; SER-528; THR-532; SER-535; SER-555; SER-594; SER-611; THR-696; SER-707; SER-717; SER-718; SER-724 AND SER-734</scope>
    <scope>VARIANT [LARGE SCALE ANALYSIS] ARG-525</scope>
    <scope>IDENTIFICATION BY MASS SPECTROMETRY [LARGE SCALE ANALYSIS]</scope>
    <source>
        <tissue>Cervix carcinoma</tissue>
    </source>
</reference>
<reference key="13">
    <citation type="journal article" date="2013" name="J. Proteome Res.">
        <title>Toward a comprehensive characterization of a human cancer cell phosphoproteome.</title>
        <authorList>
            <person name="Zhou H."/>
            <person name="Di Palma S."/>
            <person name="Preisinger C."/>
            <person name="Peng M."/>
            <person name="Polat A.N."/>
            <person name="Heck A.J."/>
            <person name="Mohammed S."/>
        </authorList>
    </citation>
    <scope>PHOSPHORYLATION [LARGE SCALE ANALYSIS] AT SER-187; SER-247; SER-262; SER-331; SER-480; SER-514; SER-555; SER-594; SER-611; SER-724 AND SER-734</scope>
    <scope>VARIANT [LARGE SCALE ANALYSIS] ARG-525</scope>
    <scope>IDENTIFICATION BY MASS SPECTROMETRY [LARGE SCALE ANALYSIS]</scope>
    <source>
        <tissue>Cervix carcinoma</tissue>
        <tissue>Erythroleukemia</tissue>
    </source>
</reference>
<name>GTSE1_HUMAN</name>
<proteinExistence type="evidence at protein level"/>
<feature type="chain" id="PRO_0000083875" description="G2 and S phase-expressed protein 1">
    <location>
        <begin position="1"/>
        <end position="739"/>
    </location>
</feature>
<feature type="region of interest" description="Disordered" evidence="3">
    <location>
        <begin position="1"/>
        <end position="20"/>
    </location>
</feature>
<feature type="region of interest" description="Disordered" evidence="3">
    <location>
        <begin position="116"/>
        <end position="136"/>
    </location>
</feature>
<feature type="region of interest" description="Disordered" evidence="3">
    <location>
        <begin position="149"/>
        <end position="306"/>
    </location>
</feature>
<feature type="region of interest" description="Disordered" evidence="3">
    <location>
        <begin position="320"/>
        <end position="639"/>
    </location>
</feature>
<feature type="compositionally biased region" description="Basic and acidic residues" evidence="3">
    <location>
        <begin position="1"/>
        <end position="11"/>
    </location>
</feature>
<feature type="compositionally biased region" description="Basic and acidic residues" evidence="3">
    <location>
        <begin position="149"/>
        <end position="165"/>
    </location>
</feature>
<feature type="compositionally biased region" description="Low complexity" evidence="3">
    <location>
        <begin position="181"/>
        <end position="195"/>
    </location>
</feature>
<feature type="compositionally biased region" description="Basic and acidic residues" evidence="3">
    <location>
        <begin position="268"/>
        <end position="280"/>
    </location>
</feature>
<feature type="compositionally biased region" description="Low complexity" evidence="3">
    <location>
        <begin position="284"/>
        <end position="294"/>
    </location>
</feature>
<feature type="compositionally biased region" description="Low complexity" evidence="3">
    <location>
        <begin position="330"/>
        <end position="342"/>
    </location>
</feature>
<feature type="compositionally biased region" description="Polar residues" evidence="3">
    <location>
        <begin position="360"/>
        <end position="372"/>
    </location>
</feature>
<feature type="compositionally biased region" description="Low complexity" evidence="3">
    <location>
        <begin position="411"/>
        <end position="424"/>
    </location>
</feature>
<feature type="compositionally biased region" description="Polar residues" evidence="3">
    <location>
        <begin position="430"/>
        <end position="446"/>
    </location>
</feature>
<feature type="compositionally biased region" description="Polar residues" evidence="3">
    <location>
        <begin position="455"/>
        <end position="470"/>
    </location>
</feature>
<feature type="compositionally biased region" description="Polar residues" evidence="3">
    <location>
        <begin position="481"/>
        <end position="522"/>
    </location>
</feature>
<feature type="compositionally biased region" description="Basic and acidic residues" evidence="3">
    <location>
        <begin position="577"/>
        <end position="590"/>
    </location>
</feature>
<feature type="modified residue" description="Phosphoserine" evidence="13">
    <location>
        <position position="91"/>
    </location>
</feature>
<feature type="modified residue" description="Phosphoserine" evidence="13">
    <location>
        <position position="157"/>
    </location>
</feature>
<feature type="modified residue" description="Phosphothreonine" evidence="13">
    <location>
        <position position="159"/>
    </location>
</feature>
<feature type="modified residue" description="Phosphoserine" evidence="11 13">
    <location>
        <position position="171"/>
    </location>
</feature>
<feature type="modified residue" description="Phosphoserine" evidence="10 11 13 14">
    <location>
        <position position="187"/>
    </location>
</feature>
<feature type="modified residue" description="Phosphoserine" evidence="13">
    <location>
        <position position="208"/>
    </location>
</feature>
<feature type="modified residue" description="Phosphoserine" evidence="14">
    <location>
        <position position="247"/>
    </location>
</feature>
<feature type="modified residue" description="Phosphoserine" evidence="14">
    <location>
        <position position="262"/>
    </location>
</feature>
<feature type="modified residue" description="Phosphoserine" evidence="14">
    <location>
        <position position="331"/>
    </location>
</feature>
<feature type="modified residue" description="Phosphoserine" evidence="14">
    <location>
        <position position="480"/>
    </location>
</feature>
<feature type="modified residue" description="Phosphothreonine" evidence="2">
    <location>
        <position position="485"/>
    </location>
</feature>
<feature type="modified residue" description="Phosphoserine" evidence="11">
    <location>
        <position position="496"/>
    </location>
</feature>
<feature type="modified residue" description="Phosphoserine" evidence="11">
    <location>
        <position position="499"/>
    </location>
</feature>
<feature type="modified residue" description="Phosphoserine" evidence="11 13 14">
    <location>
        <position position="514"/>
    </location>
</feature>
<feature type="modified residue" description="Phosphoserine" evidence="11">
    <location>
        <position position="520"/>
    </location>
</feature>
<feature type="modified residue" description="Phosphoserine" evidence="10 11 13">
    <location>
        <position position="523"/>
    </location>
</feature>
<feature type="modified residue" description="Phosphoserine" evidence="13">
    <location>
        <position position="528"/>
    </location>
</feature>
<feature type="modified residue" description="Phosphothreonine" evidence="13">
    <location>
        <position position="532"/>
    </location>
</feature>
<feature type="modified residue" description="Phosphoserine" evidence="13">
    <location>
        <position position="535"/>
    </location>
</feature>
<feature type="modified residue" description="Phosphoserine" evidence="13 14">
    <location>
        <position position="555"/>
    </location>
</feature>
<feature type="modified residue" description="Phosphoserine" evidence="11 13 14">
    <location>
        <position position="594"/>
    </location>
</feature>
<feature type="modified residue" description="Phosphoserine" evidence="10 11 12 13 14">
    <location>
        <position position="611"/>
    </location>
</feature>
<feature type="modified residue" description="Phosphothreonine" evidence="13">
    <location>
        <position position="696"/>
    </location>
</feature>
<feature type="modified residue" description="Phosphoserine" evidence="13">
    <location>
        <position position="707"/>
    </location>
</feature>
<feature type="modified residue" description="Phosphoserine" evidence="13">
    <location>
        <position position="717"/>
    </location>
</feature>
<feature type="modified residue" description="Phosphoserine" evidence="13">
    <location>
        <position position="718"/>
    </location>
</feature>
<feature type="modified residue" description="Phosphoserine" evidence="13 14">
    <location>
        <position position="724"/>
    </location>
</feature>
<feature type="modified residue" description="Phosphoserine" evidence="13 14">
    <location>
        <position position="734"/>
    </location>
</feature>
<feature type="sequence variant" id="VAR_032816" description="In dbSNP:rs6008600.">
    <original>T</original>
    <variation>A</variation>
    <location>
        <position position="200"/>
    </location>
</feature>
<feature type="sequence variant" id="VAR_032817" description="In dbSNP:rs34404175.">
    <original>A</original>
    <variation>V</variation>
    <location>
        <position position="219"/>
    </location>
</feature>
<feature type="sequence variant" id="VAR_032818" description="In dbSNP:rs35503220.">
    <original>A</original>
    <variation>T</variation>
    <location>
        <position position="293"/>
    </location>
</feature>
<feature type="sequence variant" id="VAR_056905" description="In dbSNP:rs6008622.">
    <original>S</original>
    <variation>N</variation>
    <location>
        <position position="322"/>
    </location>
</feature>
<feature type="sequence variant" id="VAR_032819" description="In dbSNP:rs6008622.">
    <original>S</original>
    <variation>N</variation>
    <location>
        <position position="341"/>
    </location>
</feature>
<feature type="sequence variant" id="VAR_032820" description="In dbSNP:rs6008684.">
    <original>D</original>
    <variation>E</variation>
    <location>
        <position position="482"/>
    </location>
</feature>
<feature type="sequence variant" id="VAR_021973" description="In dbSNP:rs2281192.">
    <original>S</original>
    <variation>L</variation>
    <location>
        <position position="489"/>
    </location>
</feature>
<feature type="sequence variant" id="VAR_024154" description="In dbSNP:rs140054." evidence="4 5 6 7 10 11 13 14">
    <original>W</original>
    <variation>R</variation>
    <location>
        <position position="525"/>
    </location>
</feature>
<feature type="sequence variant" id="VAR_032821" description="In dbSNP:rs16995138.">
    <original>A</original>
    <variation>T</variation>
    <location>
        <position position="654"/>
    </location>
</feature>
<feature type="sequence conflict" description="In Ref. 4; AAH75828." evidence="8" ref="4">
    <original>P</original>
    <variation>S</variation>
    <location>
        <position position="23"/>
    </location>
</feature>
<feature type="sequence conflict" description="In Ref. 2; BAD96526." evidence="8" ref="2">
    <original>M</original>
    <variation>V</variation>
    <location>
        <position position="154"/>
    </location>
</feature>
<feature type="sequence conflict" description="In Ref. 1; AAF31459." evidence="8" ref="1">
    <original>V</original>
    <variation>I</variation>
    <location>
        <position position="278"/>
    </location>
</feature>
<feature type="sequence conflict" description="In Ref. 2; BAD96526." evidence="8" ref="2">
    <original>N</original>
    <variation>D</variation>
    <location>
        <position position="325"/>
    </location>
</feature>
<feature type="sequence conflict" description="In Ref. 2; BAD96526." evidence="8" ref="2">
    <original>K</original>
    <variation>R</variation>
    <location>
        <position position="474"/>
    </location>
</feature>
<comment type="function">
    <text>May be involved in p53-induced cell cycle arrest in G2/M phase by interfering with microtubule rearrangements that are required to enter mitosis. Overexpression delays G2/M phase progression.</text>
</comment>
<comment type="interaction">
    <interactant intactId="EBI-2511327">
        <id>Q9NYZ3</id>
    </interactant>
    <interactant intactId="EBI-447141">
        <id>Q9UJY5</id>
        <label>GGA1</label>
    </interactant>
    <organismsDiffer>false</organismsDiffer>
    <experiments>2</experiments>
</comment>
<comment type="interaction">
    <interactant intactId="EBI-2511327">
        <id>Q9NYZ3</id>
    </interactant>
    <interactant intactId="EBI-476768">
        <id>P53350</id>
        <label>PLK1</label>
    </interactant>
    <organismsDiffer>false</organismsDiffer>
    <experiments>6</experiments>
</comment>
<comment type="subcellular location">
    <subcellularLocation>
        <location>Cytoplasm</location>
        <location>Cytoskeleton</location>
    </subcellularLocation>
    <text>Associated with microtubules.</text>
</comment>
<comment type="developmental stage">
    <text>Expressed in G2/M phase. Not detected in quiescent cells.</text>
</comment>
<comment type="PTM">
    <text evidence="1">Phosphorylated in mitosis.</text>
</comment>
<comment type="caution">
    <text evidence="8">It is uncertain whether Met-1 or Met-20 is the initiator.</text>
</comment>
<comment type="sequence caution" evidence="8">
    <conflict type="erroneous initiation">
        <sequence resource="EMBL-CDS" id="AAF31459"/>
    </conflict>
    <text>Truncated N-terminus.</text>
</comment>
<comment type="sequence caution" evidence="8">
    <conflict type="erroneous initiation">
        <sequence resource="EMBL-CDS" id="AAH06325"/>
    </conflict>
    <text>Truncated N-terminus.</text>
</comment>
<comment type="sequence caution" evidence="8">
    <conflict type="erroneous initiation">
        <sequence resource="EMBL-CDS" id="AAH75828"/>
    </conflict>
    <text>Truncated N-terminus.</text>
</comment>
<comment type="sequence caution" evidence="8">
    <conflict type="erroneous initiation">
        <sequence resource="EMBL-CDS" id="BAD96526"/>
    </conflict>
    <text>Truncated N-terminus.</text>
</comment>
<comment type="sequence caution" evidence="8">
    <conflict type="erroneous initiation">
        <sequence resource="EMBL-CDS" id="BAG37928"/>
    </conflict>
    <text>Truncated N-terminus.</text>
</comment>
<comment type="sequence caution" evidence="8">
    <conflict type="erroneous initiation">
        <sequence resource="EMBL-CDS" id="CAJ86449"/>
    </conflict>
    <text>Truncated N-terminus.</text>
</comment>